<evidence type="ECO:0000255" key="1">
    <source>
        <dbReference type="HAMAP-Rule" id="MF_00037"/>
    </source>
</evidence>
<reference key="1">
    <citation type="journal article" date="2009" name="PLoS Pathog.">
        <title>Genomic evidence for the evolution of Streptococcus equi: host restriction, increased virulence, and genetic exchange with human pathogens.</title>
        <authorList>
            <person name="Holden M.T.G."/>
            <person name="Heather Z."/>
            <person name="Paillot R."/>
            <person name="Steward K.F."/>
            <person name="Webb K."/>
            <person name="Ainslie F."/>
            <person name="Jourdan T."/>
            <person name="Bason N.C."/>
            <person name="Holroyd N.E."/>
            <person name="Mungall K."/>
            <person name="Quail M.A."/>
            <person name="Sanders M."/>
            <person name="Simmonds M."/>
            <person name="Willey D."/>
            <person name="Brooks K."/>
            <person name="Aanensen D.M."/>
            <person name="Spratt B.G."/>
            <person name="Jolley K.A."/>
            <person name="Maiden M.C.J."/>
            <person name="Kehoe M."/>
            <person name="Chanter N."/>
            <person name="Bentley S.D."/>
            <person name="Robinson C."/>
            <person name="Maskell D.J."/>
            <person name="Parkhill J."/>
            <person name="Waller A.S."/>
        </authorList>
    </citation>
    <scope>NUCLEOTIDE SEQUENCE [LARGE SCALE GENOMIC DNA]</scope>
    <source>
        <strain>4047</strain>
    </source>
</reference>
<proteinExistence type="inferred from homology"/>
<sequence length="295" mass="32296">MIAELEGIDIRENEALKHYTYTQVGGPADFLAFPRNHYELSRIVDYANHNHIPWMVLGNASNLIVRDGGIRGFVIMFDKLNAVRLNGYTLEAEAGANLIETTKVAKFHSLTGFEFACGIPGSIGGAVFMNAGAYGGEIAHIFLSAKVLTPEGKIKKISAREMAFGYRHSVIQETGDIVISAKFALKPGNHDSICQEMNRLNHLRKLKQPLEFPSCGSVFKRPPGHFAGQLIMDANLKGHRVGGVEVSKKHAGFMINVADGSAKDYEDLIAHVIRTVEQASGVRLEPEVRIIGESL</sequence>
<comment type="function">
    <text evidence="1">Cell wall formation.</text>
</comment>
<comment type="catalytic activity">
    <reaction evidence="1">
        <text>UDP-N-acetyl-alpha-D-muramate + NADP(+) = UDP-N-acetyl-3-O-(1-carboxyvinyl)-alpha-D-glucosamine + NADPH + H(+)</text>
        <dbReference type="Rhea" id="RHEA:12248"/>
        <dbReference type="ChEBI" id="CHEBI:15378"/>
        <dbReference type="ChEBI" id="CHEBI:57783"/>
        <dbReference type="ChEBI" id="CHEBI:58349"/>
        <dbReference type="ChEBI" id="CHEBI:68483"/>
        <dbReference type="ChEBI" id="CHEBI:70757"/>
        <dbReference type="EC" id="1.3.1.98"/>
    </reaction>
</comment>
<comment type="cofactor">
    <cofactor evidence="1">
        <name>FAD</name>
        <dbReference type="ChEBI" id="CHEBI:57692"/>
    </cofactor>
</comment>
<comment type="pathway">
    <text evidence="1">Cell wall biogenesis; peptidoglycan biosynthesis.</text>
</comment>
<comment type="subcellular location">
    <subcellularLocation>
        <location evidence="1">Cytoplasm</location>
    </subcellularLocation>
</comment>
<comment type="similarity">
    <text evidence="1">Belongs to the MurB family.</text>
</comment>
<gene>
    <name evidence="1" type="primary">murB</name>
    <name type="ordered locus">SEQ_1128</name>
</gene>
<protein>
    <recommendedName>
        <fullName evidence="1">UDP-N-acetylenolpyruvoylglucosamine reductase</fullName>
        <ecNumber evidence="1">1.3.1.98</ecNumber>
    </recommendedName>
    <alternativeName>
        <fullName evidence="1">UDP-N-acetylmuramate dehydrogenase</fullName>
    </alternativeName>
</protein>
<organism>
    <name type="scientific">Streptococcus equi subsp. equi (strain 4047)</name>
    <dbReference type="NCBI Taxonomy" id="553482"/>
    <lineage>
        <taxon>Bacteria</taxon>
        <taxon>Bacillati</taxon>
        <taxon>Bacillota</taxon>
        <taxon>Bacilli</taxon>
        <taxon>Lactobacillales</taxon>
        <taxon>Streptococcaceae</taxon>
        <taxon>Streptococcus</taxon>
    </lineage>
</organism>
<name>MURB_STRE4</name>
<dbReference type="EC" id="1.3.1.98" evidence="1"/>
<dbReference type="EMBL" id="FM204883">
    <property type="protein sequence ID" value="CAW93799.1"/>
    <property type="molecule type" value="Genomic_DNA"/>
</dbReference>
<dbReference type="RefSeq" id="WP_012679534.1">
    <property type="nucleotide sequence ID" value="NC_012471.1"/>
</dbReference>
<dbReference type="SMR" id="C0MA63"/>
<dbReference type="KEGG" id="seu:SEQ_1128"/>
<dbReference type="HOGENOM" id="CLU_035304_1_1_9"/>
<dbReference type="OrthoDB" id="9804753at2"/>
<dbReference type="UniPathway" id="UPA00219"/>
<dbReference type="Proteomes" id="UP000001365">
    <property type="component" value="Chromosome"/>
</dbReference>
<dbReference type="GO" id="GO:0005829">
    <property type="term" value="C:cytosol"/>
    <property type="evidence" value="ECO:0007669"/>
    <property type="project" value="TreeGrafter"/>
</dbReference>
<dbReference type="GO" id="GO:0071949">
    <property type="term" value="F:FAD binding"/>
    <property type="evidence" value="ECO:0007669"/>
    <property type="project" value="InterPro"/>
</dbReference>
<dbReference type="GO" id="GO:0008762">
    <property type="term" value="F:UDP-N-acetylmuramate dehydrogenase activity"/>
    <property type="evidence" value="ECO:0007669"/>
    <property type="project" value="UniProtKB-UniRule"/>
</dbReference>
<dbReference type="GO" id="GO:0051301">
    <property type="term" value="P:cell division"/>
    <property type="evidence" value="ECO:0007669"/>
    <property type="project" value="UniProtKB-KW"/>
</dbReference>
<dbReference type="GO" id="GO:0071555">
    <property type="term" value="P:cell wall organization"/>
    <property type="evidence" value="ECO:0007669"/>
    <property type="project" value="UniProtKB-KW"/>
</dbReference>
<dbReference type="GO" id="GO:0009252">
    <property type="term" value="P:peptidoglycan biosynthetic process"/>
    <property type="evidence" value="ECO:0007669"/>
    <property type="project" value="UniProtKB-UniRule"/>
</dbReference>
<dbReference type="GO" id="GO:0008360">
    <property type="term" value="P:regulation of cell shape"/>
    <property type="evidence" value="ECO:0007669"/>
    <property type="project" value="UniProtKB-KW"/>
</dbReference>
<dbReference type="Gene3D" id="3.30.465.10">
    <property type="match status" value="1"/>
</dbReference>
<dbReference type="Gene3D" id="3.90.78.10">
    <property type="entry name" value="UDP-N-acetylenolpyruvoylglucosamine reductase, C-terminal domain"/>
    <property type="match status" value="1"/>
</dbReference>
<dbReference type="Gene3D" id="3.30.43.10">
    <property type="entry name" value="Uridine Diphospho-n-acetylenolpyruvylglucosamine Reductase, domain 2"/>
    <property type="match status" value="1"/>
</dbReference>
<dbReference type="HAMAP" id="MF_00037">
    <property type="entry name" value="MurB"/>
    <property type="match status" value="1"/>
</dbReference>
<dbReference type="InterPro" id="IPR016166">
    <property type="entry name" value="FAD-bd_PCMH"/>
</dbReference>
<dbReference type="InterPro" id="IPR036318">
    <property type="entry name" value="FAD-bd_PCMH-like_sf"/>
</dbReference>
<dbReference type="InterPro" id="IPR016167">
    <property type="entry name" value="FAD-bd_PCMH_sub1"/>
</dbReference>
<dbReference type="InterPro" id="IPR016169">
    <property type="entry name" value="FAD-bd_PCMH_sub2"/>
</dbReference>
<dbReference type="InterPro" id="IPR003170">
    <property type="entry name" value="MurB"/>
</dbReference>
<dbReference type="InterPro" id="IPR011601">
    <property type="entry name" value="MurB_C"/>
</dbReference>
<dbReference type="InterPro" id="IPR036635">
    <property type="entry name" value="MurB_C_sf"/>
</dbReference>
<dbReference type="InterPro" id="IPR006094">
    <property type="entry name" value="Oxid_FAD_bind_N"/>
</dbReference>
<dbReference type="NCBIfam" id="TIGR00179">
    <property type="entry name" value="murB"/>
    <property type="match status" value="1"/>
</dbReference>
<dbReference type="NCBIfam" id="NF010480">
    <property type="entry name" value="PRK13905.1"/>
    <property type="match status" value="1"/>
</dbReference>
<dbReference type="PANTHER" id="PTHR21071">
    <property type="entry name" value="UDP-N-ACETYLENOLPYRUVOYLGLUCOSAMINE REDUCTASE"/>
    <property type="match status" value="1"/>
</dbReference>
<dbReference type="PANTHER" id="PTHR21071:SF4">
    <property type="entry name" value="UDP-N-ACETYLENOLPYRUVOYLGLUCOSAMINE REDUCTASE"/>
    <property type="match status" value="1"/>
</dbReference>
<dbReference type="Pfam" id="PF01565">
    <property type="entry name" value="FAD_binding_4"/>
    <property type="match status" value="1"/>
</dbReference>
<dbReference type="Pfam" id="PF02873">
    <property type="entry name" value="MurB_C"/>
    <property type="match status" value="1"/>
</dbReference>
<dbReference type="SUPFAM" id="SSF56176">
    <property type="entry name" value="FAD-binding/transporter-associated domain-like"/>
    <property type="match status" value="1"/>
</dbReference>
<dbReference type="SUPFAM" id="SSF56194">
    <property type="entry name" value="Uridine diphospho-N-Acetylenolpyruvylglucosamine reductase, MurB, C-terminal domain"/>
    <property type="match status" value="1"/>
</dbReference>
<dbReference type="PROSITE" id="PS51387">
    <property type="entry name" value="FAD_PCMH"/>
    <property type="match status" value="1"/>
</dbReference>
<keyword id="KW-0131">Cell cycle</keyword>
<keyword id="KW-0132">Cell division</keyword>
<keyword id="KW-0133">Cell shape</keyword>
<keyword id="KW-0961">Cell wall biogenesis/degradation</keyword>
<keyword id="KW-0963">Cytoplasm</keyword>
<keyword id="KW-0274">FAD</keyword>
<keyword id="KW-0285">Flavoprotein</keyword>
<keyword id="KW-0521">NADP</keyword>
<keyword id="KW-0560">Oxidoreductase</keyword>
<keyword id="KW-0573">Peptidoglycan synthesis</keyword>
<feature type="chain" id="PRO_1000117137" description="UDP-N-acetylenolpyruvoylglucosamine reductase">
    <location>
        <begin position="1"/>
        <end position="295"/>
    </location>
</feature>
<feature type="domain" description="FAD-binding PCMH-type" evidence="1">
    <location>
        <begin position="23"/>
        <end position="188"/>
    </location>
</feature>
<feature type="active site" evidence="1">
    <location>
        <position position="167"/>
    </location>
</feature>
<feature type="active site" description="Proton donor" evidence="1">
    <location>
        <position position="217"/>
    </location>
</feature>
<feature type="active site" evidence="1">
    <location>
        <position position="287"/>
    </location>
</feature>
<accession>C0MA63</accession>